<dbReference type="EMBL" id="AL163972">
    <property type="protein sequence ID" value="CAB88065.1"/>
    <property type="molecule type" value="Genomic_DNA"/>
</dbReference>
<dbReference type="EMBL" id="CP002686">
    <property type="protein sequence ID" value="AEE79545.1"/>
    <property type="molecule type" value="Genomic_DNA"/>
</dbReference>
<dbReference type="EMBL" id="AY087210">
    <property type="protein sequence ID" value="AAM64766.1"/>
    <property type="status" value="ALT_INIT"/>
    <property type="molecule type" value="mRNA"/>
</dbReference>
<dbReference type="EMBL" id="AK220913">
    <property type="protein sequence ID" value="BAD94361.1"/>
    <property type="status" value="ALT_INIT"/>
    <property type="molecule type" value="mRNA"/>
</dbReference>
<dbReference type="PIR" id="T49063">
    <property type="entry name" value="T49063"/>
</dbReference>
<dbReference type="SMR" id="Q9LXX8"/>
<dbReference type="STRING" id="3702.Q9LXX8"/>
<dbReference type="PaxDb" id="3702-AT3G56620.1"/>
<dbReference type="EnsemblPlants" id="AT3G56620.1">
    <property type="protein sequence ID" value="AT3G56620.1"/>
    <property type="gene ID" value="AT3G56620"/>
</dbReference>
<dbReference type="Gramene" id="AT3G56620.1">
    <property type="protein sequence ID" value="AT3G56620.1"/>
    <property type="gene ID" value="AT3G56620"/>
</dbReference>
<dbReference type="KEGG" id="ath:AT3G56620"/>
<dbReference type="Araport" id="AT3G56620"/>
<dbReference type="TAIR" id="AT3G56620">
    <property type="gene designation" value="UMAMIT10"/>
</dbReference>
<dbReference type="eggNOG" id="ENOG502QRHH">
    <property type="taxonomic scope" value="Eukaryota"/>
</dbReference>
<dbReference type="HOGENOM" id="CLU_025359_1_1_1"/>
<dbReference type="InParanoid" id="Q9LXX8"/>
<dbReference type="OMA" id="EIVKCCN"/>
<dbReference type="PhylomeDB" id="Q9LXX8"/>
<dbReference type="PRO" id="PR:Q9LXX8"/>
<dbReference type="Proteomes" id="UP000006548">
    <property type="component" value="Chromosome 3"/>
</dbReference>
<dbReference type="ExpressionAtlas" id="Q9LXX8">
    <property type="expression patterns" value="baseline and differential"/>
</dbReference>
<dbReference type="GO" id="GO:0016020">
    <property type="term" value="C:membrane"/>
    <property type="evidence" value="ECO:0007669"/>
    <property type="project" value="UniProtKB-SubCell"/>
</dbReference>
<dbReference type="GO" id="GO:0022857">
    <property type="term" value="F:transmembrane transporter activity"/>
    <property type="evidence" value="ECO:0007669"/>
    <property type="project" value="InterPro"/>
</dbReference>
<dbReference type="InterPro" id="IPR000620">
    <property type="entry name" value="EamA_dom"/>
</dbReference>
<dbReference type="InterPro" id="IPR030184">
    <property type="entry name" value="WAT1-related"/>
</dbReference>
<dbReference type="PANTHER" id="PTHR31218">
    <property type="entry name" value="WAT1-RELATED PROTEIN"/>
    <property type="match status" value="1"/>
</dbReference>
<dbReference type="Pfam" id="PF00892">
    <property type="entry name" value="EamA"/>
    <property type="match status" value="2"/>
</dbReference>
<dbReference type="SUPFAM" id="SSF103481">
    <property type="entry name" value="Multidrug resistance efflux transporter EmrE"/>
    <property type="match status" value="2"/>
</dbReference>
<accession>Q9LXX8</accession>
<accession>Q56ZQ0</accession>
<accession>Q8LBH3</accession>
<reference key="1">
    <citation type="journal article" date="2000" name="Nature">
        <title>Sequence and analysis of chromosome 3 of the plant Arabidopsis thaliana.</title>
        <authorList>
            <person name="Salanoubat M."/>
            <person name="Lemcke K."/>
            <person name="Rieger M."/>
            <person name="Ansorge W."/>
            <person name="Unseld M."/>
            <person name="Fartmann B."/>
            <person name="Valle G."/>
            <person name="Bloecker H."/>
            <person name="Perez-Alonso M."/>
            <person name="Obermaier B."/>
            <person name="Delseny M."/>
            <person name="Boutry M."/>
            <person name="Grivell L.A."/>
            <person name="Mache R."/>
            <person name="Puigdomenech P."/>
            <person name="De Simone V."/>
            <person name="Choisne N."/>
            <person name="Artiguenave F."/>
            <person name="Robert C."/>
            <person name="Brottier P."/>
            <person name="Wincker P."/>
            <person name="Cattolico L."/>
            <person name="Weissenbach J."/>
            <person name="Saurin W."/>
            <person name="Quetier F."/>
            <person name="Schaefer M."/>
            <person name="Mueller-Auer S."/>
            <person name="Gabel C."/>
            <person name="Fuchs M."/>
            <person name="Benes V."/>
            <person name="Wurmbach E."/>
            <person name="Drzonek H."/>
            <person name="Erfle H."/>
            <person name="Jordan N."/>
            <person name="Bangert S."/>
            <person name="Wiedelmann R."/>
            <person name="Kranz H."/>
            <person name="Voss H."/>
            <person name="Holland R."/>
            <person name="Brandt P."/>
            <person name="Nyakatura G."/>
            <person name="Vezzi A."/>
            <person name="D'Angelo M."/>
            <person name="Pallavicini A."/>
            <person name="Toppo S."/>
            <person name="Simionati B."/>
            <person name="Conrad A."/>
            <person name="Hornischer K."/>
            <person name="Kauer G."/>
            <person name="Loehnert T.-H."/>
            <person name="Nordsiek G."/>
            <person name="Reichelt J."/>
            <person name="Scharfe M."/>
            <person name="Schoen O."/>
            <person name="Bargues M."/>
            <person name="Terol J."/>
            <person name="Climent J."/>
            <person name="Navarro P."/>
            <person name="Collado C."/>
            <person name="Perez-Perez A."/>
            <person name="Ottenwaelder B."/>
            <person name="Duchemin D."/>
            <person name="Cooke R."/>
            <person name="Laudie M."/>
            <person name="Berger-Llauro C."/>
            <person name="Purnelle B."/>
            <person name="Masuy D."/>
            <person name="de Haan M."/>
            <person name="Maarse A.C."/>
            <person name="Alcaraz J.-P."/>
            <person name="Cottet A."/>
            <person name="Casacuberta E."/>
            <person name="Monfort A."/>
            <person name="Argiriou A."/>
            <person name="Flores M."/>
            <person name="Liguori R."/>
            <person name="Vitale D."/>
            <person name="Mannhaupt G."/>
            <person name="Haase D."/>
            <person name="Schoof H."/>
            <person name="Rudd S."/>
            <person name="Zaccaria P."/>
            <person name="Mewes H.-W."/>
            <person name="Mayer K.F.X."/>
            <person name="Kaul S."/>
            <person name="Town C.D."/>
            <person name="Koo H.L."/>
            <person name="Tallon L.J."/>
            <person name="Jenkins J."/>
            <person name="Rooney T."/>
            <person name="Rizzo M."/>
            <person name="Walts A."/>
            <person name="Utterback T."/>
            <person name="Fujii C.Y."/>
            <person name="Shea T.P."/>
            <person name="Creasy T.H."/>
            <person name="Haas B."/>
            <person name="Maiti R."/>
            <person name="Wu D."/>
            <person name="Peterson J."/>
            <person name="Van Aken S."/>
            <person name="Pai G."/>
            <person name="Militscher J."/>
            <person name="Sellers P."/>
            <person name="Gill J.E."/>
            <person name="Feldblyum T.V."/>
            <person name="Preuss D."/>
            <person name="Lin X."/>
            <person name="Nierman W.C."/>
            <person name="Salzberg S.L."/>
            <person name="White O."/>
            <person name="Venter J.C."/>
            <person name="Fraser C.M."/>
            <person name="Kaneko T."/>
            <person name="Nakamura Y."/>
            <person name="Sato S."/>
            <person name="Kato T."/>
            <person name="Asamizu E."/>
            <person name="Sasamoto S."/>
            <person name="Kimura T."/>
            <person name="Idesawa K."/>
            <person name="Kawashima K."/>
            <person name="Kishida Y."/>
            <person name="Kiyokawa C."/>
            <person name="Kohara M."/>
            <person name="Matsumoto M."/>
            <person name="Matsuno A."/>
            <person name="Muraki A."/>
            <person name="Nakayama S."/>
            <person name="Nakazaki N."/>
            <person name="Shinpo S."/>
            <person name="Takeuchi C."/>
            <person name="Wada T."/>
            <person name="Watanabe A."/>
            <person name="Yamada M."/>
            <person name="Yasuda M."/>
            <person name="Tabata S."/>
        </authorList>
    </citation>
    <scope>NUCLEOTIDE SEQUENCE [LARGE SCALE GENOMIC DNA]</scope>
    <source>
        <strain>cv. Columbia</strain>
    </source>
</reference>
<reference key="2">
    <citation type="journal article" date="2017" name="Plant J.">
        <title>Araport11: a complete reannotation of the Arabidopsis thaliana reference genome.</title>
        <authorList>
            <person name="Cheng C.Y."/>
            <person name="Krishnakumar V."/>
            <person name="Chan A.P."/>
            <person name="Thibaud-Nissen F."/>
            <person name="Schobel S."/>
            <person name="Town C.D."/>
        </authorList>
    </citation>
    <scope>GENOME REANNOTATION</scope>
    <source>
        <strain>cv. Columbia</strain>
    </source>
</reference>
<reference key="3">
    <citation type="submission" date="2002-03" db="EMBL/GenBank/DDBJ databases">
        <title>Full-length cDNA from Arabidopsis thaliana.</title>
        <authorList>
            <person name="Brover V.V."/>
            <person name="Troukhan M.E."/>
            <person name="Alexandrov N.A."/>
            <person name="Lu Y.-P."/>
            <person name="Flavell R.B."/>
            <person name="Feldmann K.A."/>
        </authorList>
    </citation>
    <scope>NUCLEOTIDE SEQUENCE [LARGE SCALE MRNA]</scope>
</reference>
<reference key="4">
    <citation type="submission" date="2005-03" db="EMBL/GenBank/DDBJ databases">
        <title>Large-scale analysis of RIKEN Arabidopsis full-length (RAFL) cDNAs.</title>
        <authorList>
            <person name="Totoki Y."/>
            <person name="Seki M."/>
            <person name="Ishida J."/>
            <person name="Nakajima M."/>
            <person name="Enju A."/>
            <person name="Kamiya A."/>
            <person name="Narusaka M."/>
            <person name="Shin-i T."/>
            <person name="Nakagawa M."/>
            <person name="Sakamoto N."/>
            <person name="Oishi K."/>
            <person name="Kohara Y."/>
            <person name="Kobayashi M."/>
            <person name="Toyoda A."/>
            <person name="Sakaki Y."/>
            <person name="Sakurai T."/>
            <person name="Iida K."/>
            <person name="Akiyama K."/>
            <person name="Satou M."/>
            <person name="Toyoda T."/>
            <person name="Konagaya A."/>
            <person name="Carninci P."/>
            <person name="Kawai J."/>
            <person name="Hayashizaki Y."/>
            <person name="Shinozaki K."/>
        </authorList>
    </citation>
    <scope>NUCLEOTIDE SEQUENCE [LARGE SCALE MRNA] OF 224-377</scope>
    <source>
        <strain>cv. Columbia</strain>
    </source>
</reference>
<sequence length="377" mass="41347">MGLKMSESAKPYFAMVCLQFGYAGMNLVTKVVLDRGMSHYVLVAYRNAFATAAIAPFALLSERKVRPKMTFPIFMQIFVLALLGPLIDQNLYYAGLKLTSPTFAGAVTNIVPALTFIISIICRMEKVEMRKVRFQAKVVGTLVIVVGAMLMILFKIPLITFLRSHLTGHALSPAGEDYLKATVFLLIASFSWASFFVLQAATLKRYSSHLSLSTMVCFMGTLQSTALTFVMEPNLSAWNIGFDMNLLASAYAGIMSSSIAYYVQGMMTKQKSVIFVTAFNPLVVIIGSIIGFLILNQTLNLGGVLGMAILVVGVCTVLWGKEGDIDEEENIEEKFVEIVKCCNRCDIKVLSMMPRIDEEVDVEMQSAGTAKVAVGFS</sequence>
<name>WTR27_ARATH</name>
<organism>
    <name type="scientific">Arabidopsis thaliana</name>
    <name type="common">Mouse-ear cress</name>
    <dbReference type="NCBI Taxonomy" id="3702"/>
    <lineage>
        <taxon>Eukaryota</taxon>
        <taxon>Viridiplantae</taxon>
        <taxon>Streptophyta</taxon>
        <taxon>Embryophyta</taxon>
        <taxon>Tracheophyta</taxon>
        <taxon>Spermatophyta</taxon>
        <taxon>Magnoliopsida</taxon>
        <taxon>eudicotyledons</taxon>
        <taxon>Gunneridae</taxon>
        <taxon>Pentapetalae</taxon>
        <taxon>rosids</taxon>
        <taxon>malvids</taxon>
        <taxon>Brassicales</taxon>
        <taxon>Brassicaceae</taxon>
        <taxon>Camelineae</taxon>
        <taxon>Arabidopsis</taxon>
    </lineage>
</organism>
<protein>
    <recommendedName>
        <fullName>WAT1-related protein At3g56620</fullName>
    </recommendedName>
</protein>
<evidence type="ECO:0000250" key="1"/>
<evidence type="ECO:0000255" key="2"/>
<evidence type="ECO:0000305" key="3"/>
<feature type="chain" id="PRO_0000421335" description="WAT1-related protein At3g56620">
    <location>
        <begin position="1"/>
        <end position="377"/>
    </location>
</feature>
<feature type="transmembrane region" description="Helical" evidence="2">
    <location>
        <begin position="13"/>
        <end position="33"/>
    </location>
</feature>
<feature type="transmembrane region" description="Helical" evidence="2">
    <location>
        <begin position="40"/>
        <end position="60"/>
    </location>
</feature>
<feature type="transmembrane region" description="Helical" evidence="2">
    <location>
        <begin position="67"/>
        <end position="87"/>
    </location>
</feature>
<feature type="transmembrane region" description="Helical" evidence="2">
    <location>
        <begin position="102"/>
        <end position="122"/>
    </location>
</feature>
<feature type="transmembrane region" description="Helical" evidence="2">
    <location>
        <begin position="142"/>
        <end position="162"/>
    </location>
</feature>
<feature type="transmembrane region" description="Helical" evidence="2">
    <location>
        <begin position="183"/>
        <end position="203"/>
    </location>
</feature>
<feature type="transmembrane region" description="Helical" evidence="2">
    <location>
        <begin position="210"/>
        <end position="230"/>
    </location>
</feature>
<feature type="transmembrane region" description="Helical" evidence="2">
    <location>
        <begin position="235"/>
        <end position="255"/>
    </location>
</feature>
<feature type="transmembrane region" description="Helical" evidence="2">
    <location>
        <begin position="274"/>
        <end position="294"/>
    </location>
</feature>
<feature type="transmembrane region" description="Helical" evidence="2">
    <location>
        <begin position="299"/>
        <end position="319"/>
    </location>
</feature>
<feature type="domain" description="EamA 1">
    <location>
        <begin position="22"/>
        <end position="152"/>
    </location>
</feature>
<feature type="domain" description="EamA 2">
    <location>
        <begin position="190"/>
        <end position="318"/>
    </location>
</feature>
<feature type="sequence conflict" description="In Ref. 3; AAM64766." evidence="3" ref="3">
    <original>G</original>
    <variation>C</variation>
    <location>
        <position position="95"/>
    </location>
</feature>
<feature type="sequence conflict" description="In Ref. 4; BAD94361." evidence="3" ref="4">
    <original>L</original>
    <variation>I</variation>
    <location>
        <position position="318"/>
    </location>
</feature>
<proteinExistence type="evidence at transcript level"/>
<comment type="subcellular location">
    <subcellularLocation>
        <location evidence="1">Membrane</location>
        <topology evidence="3">Multi-pass membrane protein</topology>
    </subcellularLocation>
</comment>
<comment type="similarity">
    <text evidence="3">Belongs to the drug/metabolite transporter (DMT) superfamily. Plant drug/metabolite exporter (P-DME) (TC 2.A.7.4) family.</text>
</comment>
<comment type="sequence caution" evidence="3">
    <conflict type="erroneous initiation">
        <sequence resource="EMBL-CDS" id="AAM64766"/>
    </conflict>
    <text>Truncated N-terminus.</text>
</comment>
<comment type="sequence caution" evidence="3">
    <conflict type="erroneous initiation">
        <sequence resource="EMBL-CDS" id="BAD94361"/>
    </conflict>
    <text>Truncated N-terminus.</text>
</comment>
<keyword id="KW-0472">Membrane</keyword>
<keyword id="KW-1185">Reference proteome</keyword>
<keyword id="KW-0677">Repeat</keyword>
<keyword id="KW-0812">Transmembrane</keyword>
<keyword id="KW-1133">Transmembrane helix</keyword>
<gene>
    <name type="ordered locus">At3g56620</name>
    <name type="ORF">T5P19.270</name>
</gene>